<reference key="1">
    <citation type="journal article" date="2000" name="Proc. Natl. Acad. Sci. U.S.A.">
        <title>Genome sequence of Halobacterium species NRC-1.</title>
        <authorList>
            <person name="Ng W.V."/>
            <person name="Kennedy S.P."/>
            <person name="Mahairas G.G."/>
            <person name="Berquist B."/>
            <person name="Pan M."/>
            <person name="Shukla H.D."/>
            <person name="Lasky S.R."/>
            <person name="Baliga N.S."/>
            <person name="Thorsson V."/>
            <person name="Sbrogna J."/>
            <person name="Swartzell S."/>
            <person name="Weir D."/>
            <person name="Hall J."/>
            <person name="Dahl T.A."/>
            <person name="Welti R."/>
            <person name="Goo Y.A."/>
            <person name="Leithauser B."/>
            <person name="Keller K."/>
            <person name="Cruz R."/>
            <person name="Danson M.J."/>
            <person name="Hough D.W."/>
            <person name="Maddocks D.G."/>
            <person name="Jablonski P.E."/>
            <person name="Krebs M.P."/>
            <person name="Angevine C.M."/>
            <person name="Dale H."/>
            <person name="Isenbarger T.A."/>
            <person name="Peck R.F."/>
            <person name="Pohlschroder M."/>
            <person name="Spudich J.L."/>
            <person name="Jung K.-H."/>
            <person name="Alam M."/>
            <person name="Freitas T."/>
            <person name="Hou S."/>
            <person name="Daniels C.J."/>
            <person name="Dennis P.P."/>
            <person name="Omer A.D."/>
            <person name="Ebhardt H."/>
            <person name="Lowe T.M."/>
            <person name="Liang P."/>
            <person name="Riley M."/>
            <person name="Hood L."/>
            <person name="DasSarma S."/>
        </authorList>
    </citation>
    <scope>NUCLEOTIDE SEQUENCE [LARGE SCALE GENOMIC DNA]</scope>
    <source>
        <strain>ATCC 700922 / JCM 11081 / NRC-1</strain>
    </source>
</reference>
<gene>
    <name type="ordered locus">VNG_0252C</name>
</gene>
<comment type="function">
    <text evidence="1">Prenyltransferase that catalyzes the transfer of the geranylgeranyl moiety of geranylgeranyl diphosphate (GGPP) to the C3 hydroxyl of sn-glycerol-1-phosphate (G1P). This reaction is the first ether-bond-formation step in the biosynthesis of archaeal membrane lipids.</text>
</comment>
<comment type="catalytic activity">
    <reaction evidence="1">
        <text>sn-glycerol 1-phosphate + (2E,6E,10E)-geranylgeranyl diphosphate = sn-3-O-(geranylgeranyl)glycerol 1-phosphate + diphosphate</text>
        <dbReference type="Rhea" id="RHEA:23404"/>
        <dbReference type="ChEBI" id="CHEBI:33019"/>
        <dbReference type="ChEBI" id="CHEBI:57677"/>
        <dbReference type="ChEBI" id="CHEBI:57685"/>
        <dbReference type="ChEBI" id="CHEBI:58756"/>
        <dbReference type="EC" id="2.5.1.41"/>
    </reaction>
</comment>
<comment type="cofactor">
    <cofactor evidence="1">
        <name>Mg(2+)</name>
        <dbReference type="ChEBI" id="CHEBI:18420"/>
    </cofactor>
</comment>
<comment type="pathway">
    <text evidence="1">Membrane lipid metabolism; glycerophospholipid metabolism.</text>
</comment>
<comment type="subcellular location">
    <subcellularLocation>
        <location evidence="1">Cytoplasm</location>
    </subcellularLocation>
</comment>
<comment type="similarity">
    <text evidence="1">Belongs to the GGGP/HepGP synthase family. Group I subfamily.</text>
</comment>
<comment type="sequence caution" evidence="2">
    <conflict type="erroneous initiation">
        <sequence resource="EMBL-CDS" id="AAG18849"/>
    </conflict>
</comment>
<accession>Q9HSF8</accession>
<sequence>MTAPWADWDHVLKIDPDKSLVDGETFDDIAQTGTDAIEIGGTLDVTTEKMRRVIDACRTHEVPLYQEPSNPAVVVEDEALDGYLVPVVLNAGDPFWITGAHKEWVRIADLDWERTTTEAYIVMNPDASVAEYTGADCGLDADEVGAYATVAERLLGQEVVYVEYSGTLGDPAVVEAAAGGVDDAAVFYGGGIDGYDAAYRMGAHADTIVVGDLVHEAGVDAVRETVSGVRDAQAEE</sequence>
<proteinExistence type="inferred from homology"/>
<evidence type="ECO:0000255" key="1">
    <source>
        <dbReference type="HAMAP-Rule" id="MF_00112"/>
    </source>
</evidence>
<evidence type="ECO:0000305" key="2"/>
<organism>
    <name type="scientific">Halobacterium salinarum (strain ATCC 700922 / JCM 11081 / NRC-1)</name>
    <name type="common">Halobacterium halobium</name>
    <dbReference type="NCBI Taxonomy" id="64091"/>
    <lineage>
        <taxon>Archaea</taxon>
        <taxon>Methanobacteriati</taxon>
        <taxon>Methanobacteriota</taxon>
        <taxon>Stenosarchaea group</taxon>
        <taxon>Halobacteria</taxon>
        <taxon>Halobacteriales</taxon>
        <taxon>Halobacteriaceae</taxon>
        <taxon>Halobacterium</taxon>
        <taxon>Halobacterium salinarum NRC-34001</taxon>
    </lineage>
</organism>
<keyword id="KW-0963">Cytoplasm</keyword>
<keyword id="KW-0444">Lipid biosynthesis</keyword>
<keyword id="KW-0443">Lipid metabolism</keyword>
<keyword id="KW-0460">Magnesium</keyword>
<keyword id="KW-0479">Metal-binding</keyword>
<keyword id="KW-0594">Phospholipid biosynthesis</keyword>
<keyword id="KW-1208">Phospholipid metabolism</keyword>
<keyword id="KW-1185">Reference proteome</keyword>
<keyword id="KW-0808">Transferase</keyword>
<dbReference type="EC" id="2.5.1.41" evidence="1"/>
<dbReference type="EMBL" id="AE004437">
    <property type="protein sequence ID" value="AAG18849.1"/>
    <property type="status" value="ALT_INIT"/>
    <property type="molecule type" value="Genomic_DNA"/>
</dbReference>
<dbReference type="PIR" id="E84185">
    <property type="entry name" value="E84185"/>
</dbReference>
<dbReference type="RefSeq" id="WP_010902143.1">
    <property type="nucleotide sequence ID" value="NC_002607.1"/>
</dbReference>
<dbReference type="SMR" id="Q9HSF8"/>
<dbReference type="STRING" id="64091.VNG_0252C"/>
<dbReference type="PaxDb" id="64091-VNG_0252C"/>
<dbReference type="KEGG" id="hal:VNG_0252C"/>
<dbReference type="PATRIC" id="fig|64091.14.peg.184"/>
<dbReference type="HOGENOM" id="CLU_095211_0_0_2"/>
<dbReference type="InParanoid" id="Q9HSF8"/>
<dbReference type="OrthoDB" id="49758at2157"/>
<dbReference type="PhylomeDB" id="Q9HSF8"/>
<dbReference type="UniPathway" id="UPA00940"/>
<dbReference type="Proteomes" id="UP000000554">
    <property type="component" value="Chromosome"/>
</dbReference>
<dbReference type="GO" id="GO:0005737">
    <property type="term" value="C:cytoplasm"/>
    <property type="evidence" value="ECO:0007669"/>
    <property type="project" value="UniProtKB-SubCell"/>
</dbReference>
<dbReference type="GO" id="GO:0000287">
    <property type="term" value="F:magnesium ion binding"/>
    <property type="evidence" value="ECO:0007669"/>
    <property type="project" value="UniProtKB-UniRule"/>
</dbReference>
<dbReference type="GO" id="GO:0047294">
    <property type="term" value="F:phosphoglycerol geranylgeranyltransferase activity"/>
    <property type="evidence" value="ECO:0007669"/>
    <property type="project" value="UniProtKB-UniRule"/>
</dbReference>
<dbReference type="GO" id="GO:0046474">
    <property type="term" value="P:glycerophospholipid biosynthetic process"/>
    <property type="evidence" value="ECO:0007669"/>
    <property type="project" value="UniProtKB-UniRule"/>
</dbReference>
<dbReference type="CDD" id="cd02812">
    <property type="entry name" value="PcrB_like"/>
    <property type="match status" value="1"/>
</dbReference>
<dbReference type="Gene3D" id="3.20.20.390">
    <property type="entry name" value="FMN-linked oxidoreductases"/>
    <property type="match status" value="1"/>
</dbReference>
<dbReference type="HAMAP" id="MF_00112">
    <property type="entry name" value="GGGP_HepGP_synthase"/>
    <property type="match status" value="1"/>
</dbReference>
<dbReference type="InterPro" id="IPR039074">
    <property type="entry name" value="GGGP/HepGP_synthase_I"/>
</dbReference>
<dbReference type="InterPro" id="IPR038597">
    <property type="entry name" value="GGGP/HepGP_synthase_sf"/>
</dbReference>
<dbReference type="InterPro" id="IPR008205">
    <property type="entry name" value="GGGP_HepGP_synthase"/>
</dbReference>
<dbReference type="InterPro" id="IPR026417">
    <property type="entry name" value="GGGPS_halobacteria"/>
</dbReference>
<dbReference type="NCBIfam" id="TIGR01768">
    <property type="entry name" value="GGGP-family"/>
    <property type="match status" value="1"/>
</dbReference>
<dbReference type="NCBIfam" id="TIGR04147">
    <property type="entry name" value="GGGPS_Halobact"/>
    <property type="match status" value="1"/>
</dbReference>
<dbReference type="NCBIfam" id="NF003199">
    <property type="entry name" value="PRK04169.1-3"/>
    <property type="match status" value="1"/>
</dbReference>
<dbReference type="PANTHER" id="PTHR40029">
    <property type="match status" value="1"/>
</dbReference>
<dbReference type="PANTHER" id="PTHR40029:SF2">
    <property type="entry name" value="HEPTAPRENYLGLYCERYL PHOSPHATE SYNTHASE"/>
    <property type="match status" value="1"/>
</dbReference>
<dbReference type="Pfam" id="PF01884">
    <property type="entry name" value="PcrB"/>
    <property type="match status" value="1"/>
</dbReference>
<dbReference type="SUPFAM" id="SSF51395">
    <property type="entry name" value="FMN-linked oxidoreductases"/>
    <property type="match status" value="1"/>
</dbReference>
<protein>
    <recommendedName>
        <fullName evidence="1">Geranylgeranylglyceryl phosphate synthase</fullName>
        <shortName evidence="1">GGGP synthase</shortName>
        <shortName evidence="1">GGGPS</shortName>
        <ecNumber evidence="1">2.5.1.41</ecNumber>
    </recommendedName>
    <alternativeName>
        <fullName evidence="1">(S)-3-O-geranylgeranylglyceryl phosphate synthase</fullName>
    </alternativeName>
    <alternativeName>
        <fullName evidence="1">Phosphoglycerol geranylgeranyltransferase</fullName>
    </alternativeName>
</protein>
<name>GGGPS_HALSA</name>
<feature type="chain" id="PRO_0000138730" description="Geranylgeranylglyceryl phosphate synthase">
    <location>
        <begin position="1"/>
        <end position="236"/>
    </location>
</feature>
<feature type="binding site" evidence="1">
    <location>
        <position position="13"/>
    </location>
    <ligand>
        <name>sn-glycerol 1-phosphate</name>
        <dbReference type="ChEBI" id="CHEBI:57685"/>
    </ligand>
</feature>
<feature type="binding site" evidence="1">
    <location>
        <position position="15"/>
    </location>
    <ligand>
        <name>Mg(2+)</name>
        <dbReference type="ChEBI" id="CHEBI:18420"/>
    </ligand>
</feature>
<feature type="binding site" evidence="1">
    <location>
        <position position="42"/>
    </location>
    <ligand>
        <name>Mg(2+)</name>
        <dbReference type="ChEBI" id="CHEBI:18420"/>
    </ligand>
</feature>
<feature type="binding site" evidence="1">
    <location>
        <begin position="161"/>
        <end position="166"/>
    </location>
    <ligand>
        <name>sn-glycerol 1-phosphate</name>
        <dbReference type="ChEBI" id="CHEBI:57685"/>
    </ligand>
</feature>
<feature type="binding site" evidence="1">
    <location>
        <position position="191"/>
    </location>
    <ligand>
        <name>sn-glycerol 1-phosphate</name>
        <dbReference type="ChEBI" id="CHEBI:57685"/>
    </ligand>
</feature>
<feature type="binding site" evidence="1">
    <location>
        <begin position="211"/>
        <end position="212"/>
    </location>
    <ligand>
        <name>sn-glycerol 1-phosphate</name>
        <dbReference type="ChEBI" id="CHEBI:57685"/>
    </ligand>
</feature>